<name>CG121_YARLI</name>
<evidence type="ECO:0000250" key="1"/>
<evidence type="ECO:0000305" key="2"/>
<keyword id="KW-0010">Activator</keyword>
<keyword id="KW-0158">Chromosome</keyword>
<keyword id="KW-0539">Nucleus</keyword>
<keyword id="KW-1185">Reference proteome</keyword>
<keyword id="KW-0779">Telomere</keyword>
<keyword id="KW-0804">Transcription</keyword>
<keyword id="KW-0805">Transcription regulation</keyword>
<keyword id="KW-0819">tRNA processing</keyword>
<proteinExistence type="inferred from homology"/>
<sequence>MKFPQFDQEIAISYFSDVKNAGQIRNELLSGNPDYQVAFINANTLLSSKHLLAAVYRAVSDQEAGSMKTKNVHSEVLFCLGGNNNIMDSLRRFGIQDDTTNIVAVKIGGGEYTKLVEGTEEPFTDEQIAKNTDIKLVKKVYKLPGTVSLDDRAQVETAAIGALLLRGFS</sequence>
<protein>
    <recommendedName>
        <fullName>EKC/KEOPS complex subunit CGI121</fullName>
    </recommendedName>
</protein>
<gene>
    <name type="primary">CGI121</name>
    <name type="ordered locus">YALI0E01848g</name>
</gene>
<feature type="chain" id="PRO_0000279219" description="EKC/KEOPS complex subunit CGI121">
    <location>
        <begin position="1"/>
        <end position="169"/>
    </location>
</feature>
<comment type="function">
    <text evidence="1">Component of the EKC/KEOPS complex that is required for the formation of a threonylcarbamoyl group on adenosine at position 37 (t(6)A37) in tRNAs that read codons beginning with adenine. The complex is probably involved in the transfer of the threonylcarbamoyl moiety of threonylcarbamoyl-AMP (TC-AMP) to the N6 group of A37. CGI121 acts as an allosteric effector that regulates the t(6)A activity of the complex. The EKC/KEOPS complex also promotes both telomere uncapping and telomere elongation. The complex is required for efficient recruitment of transcriptional coactivators. CGI121 is not required for tRNA modification (By similarity).</text>
</comment>
<comment type="subunit">
    <text evidence="1">Component of the EKC/KEOPS complex composed of at least BUD32, CGI121, GON7, KAE1 and PCC1; the whole complex dimerizes.</text>
</comment>
<comment type="subcellular location">
    <subcellularLocation>
        <location evidence="1">Nucleus</location>
    </subcellularLocation>
    <subcellularLocation>
        <location evidence="1">Chromosome</location>
        <location evidence="1">Telomere</location>
    </subcellularLocation>
</comment>
<comment type="similarity">
    <text evidence="2">Belongs to the CGI121/TPRKB family.</text>
</comment>
<organism>
    <name type="scientific">Yarrowia lipolytica (strain CLIB 122 / E 150)</name>
    <name type="common">Yeast</name>
    <name type="synonym">Candida lipolytica</name>
    <dbReference type="NCBI Taxonomy" id="284591"/>
    <lineage>
        <taxon>Eukaryota</taxon>
        <taxon>Fungi</taxon>
        <taxon>Dikarya</taxon>
        <taxon>Ascomycota</taxon>
        <taxon>Saccharomycotina</taxon>
        <taxon>Dipodascomycetes</taxon>
        <taxon>Dipodascales</taxon>
        <taxon>Dipodascales incertae sedis</taxon>
        <taxon>Yarrowia</taxon>
    </lineage>
</organism>
<dbReference type="EMBL" id="CR382131">
    <property type="protein sequence ID" value="CAG79012.1"/>
    <property type="molecule type" value="Genomic_DNA"/>
</dbReference>
<dbReference type="RefSeq" id="XP_503433.1">
    <property type="nucleotide sequence ID" value="XM_503433.1"/>
</dbReference>
<dbReference type="SMR" id="Q6C7C9"/>
<dbReference type="FunCoup" id="Q6C7C9">
    <property type="interactions" value="509"/>
</dbReference>
<dbReference type="STRING" id="284591.Q6C7C9"/>
<dbReference type="EnsemblFungi" id="CAG79012">
    <property type="protein sequence ID" value="CAG79012"/>
    <property type="gene ID" value="YALI0_E01848g"/>
</dbReference>
<dbReference type="KEGG" id="yli:2912061"/>
<dbReference type="VEuPathDB" id="FungiDB:YALI0_E01848g"/>
<dbReference type="HOGENOM" id="CLU_065847_1_0_1"/>
<dbReference type="InParanoid" id="Q6C7C9"/>
<dbReference type="OMA" id="IVCRMST"/>
<dbReference type="OrthoDB" id="106839at4891"/>
<dbReference type="Proteomes" id="UP000001300">
    <property type="component" value="Chromosome E"/>
</dbReference>
<dbReference type="GO" id="GO:0000781">
    <property type="term" value="C:chromosome, telomeric region"/>
    <property type="evidence" value="ECO:0007669"/>
    <property type="project" value="UniProtKB-SubCell"/>
</dbReference>
<dbReference type="GO" id="GO:0005829">
    <property type="term" value="C:cytosol"/>
    <property type="evidence" value="ECO:0000318"/>
    <property type="project" value="GO_Central"/>
</dbReference>
<dbReference type="GO" id="GO:0000408">
    <property type="term" value="C:EKC/KEOPS complex"/>
    <property type="evidence" value="ECO:0000318"/>
    <property type="project" value="GO_Central"/>
</dbReference>
<dbReference type="GO" id="GO:0005634">
    <property type="term" value="C:nucleus"/>
    <property type="evidence" value="ECO:0000318"/>
    <property type="project" value="GO_Central"/>
</dbReference>
<dbReference type="GO" id="GO:0002949">
    <property type="term" value="P:tRNA threonylcarbamoyladenosine modification"/>
    <property type="evidence" value="ECO:0000318"/>
    <property type="project" value="GO_Central"/>
</dbReference>
<dbReference type="Gene3D" id="3.30.2380.10">
    <property type="entry name" value="CGI121/TPRKB"/>
    <property type="match status" value="1"/>
</dbReference>
<dbReference type="InterPro" id="IPR013926">
    <property type="entry name" value="CGI121/TPRKB"/>
</dbReference>
<dbReference type="InterPro" id="IPR036504">
    <property type="entry name" value="CGI121/TPRKB_sf"/>
</dbReference>
<dbReference type="NCBIfam" id="NF011465">
    <property type="entry name" value="PRK14886.1-1"/>
    <property type="match status" value="1"/>
</dbReference>
<dbReference type="PANTHER" id="PTHR15840">
    <property type="entry name" value="CGI-121 FAMILY MEMBER"/>
    <property type="match status" value="1"/>
</dbReference>
<dbReference type="PANTHER" id="PTHR15840:SF10">
    <property type="entry name" value="EKC_KEOPS COMPLEX SUBUNIT TPRKB"/>
    <property type="match status" value="1"/>
</dbReference>
<dbReference type="Pfam" id="PF08617">
    <property type="entry name" value="CGI-121"/>
    <property type="match status" value="1"/>
</dbReference>
<dbReference type="SUPFAM" id="SSF143870">
    <property type="entry name" value="PF0523-like"/>
    <property type="match status" value="1"/>
</dbReference>
<accession>Q6C7C9</accession>
<reference key="1">
    <citation type="journal article" date="2004" name="Nature">
        <title>Genome evolution in yeasts.</title>
        <authorList>
            <person name="Dujon B."/>
            <person name="Sherman D."/>
            <person name="Fischer G."/>
            <person name="Durrens P."/>
            <person name="Casaregola S."/>
            <person name="Lafontaine I."/>
            <person name="de Montigny J."/>
            <person name="Marck C."/>
            <person name="Neuveglise C."/>
            <person name="Talla E."/>
            <person name="Goffard N."/>
            <person name="Frangeul L."/>
            <person name="Aigle M."/>
            <person name="Anthouard V."/>
            <person name="Babour A."/>
            <person name="Barbe V."/>
            <person name="Barnay S."/>
            <person name="Blanchin S."/>
            <person name="Beckerich J.-M."/>
            <person name="Beyne E."/>
            <person name="Bleykasten C."/>
            <person name="Boisrame A."/>
            <person name="Boyer J."/>
            <person name="Cattolico L."/>
            <person name="Confanioleri F."/>
            <person name="de Daruvar A."/>
            <person name="Despons L."/>
            <person name="Fabre E."/>
            <person name="Fairhead C."/>
            <person name="Ferry-Dumazet H."/>
            <person name="Groppi A."/>
            <person name="Hantraye F."/>
            <person name="Hennequin C."/>
            <person name="Jauniaux N."/>
            <person name="Joyet P."/>
            <person name="Kachouri R."/>
            <person name="Kerrest A."/>
            <person name="Koszul R."/>
            <person name="Lemaire M."/>
            <person name="Lesur I."/>
            <person name="Ma L."/>
            <person name="Muller H."/>
            <person name="Nicaud J.-M."/>
            <person name="Nikolski M."/>
            <person name="Oztas S."/>
            <person name="Ozier-Kalogeropoulos O."/>
            <person name="Pellenz S."/>
            <person name="Potier S."/>
            <person name="Richard G.-F."/>
            <person name="Straub M.-L."/>
            <person name="Suleau A."/>
            <person name="Swennen D."/>
            <person name="Tekaia F."/>
            <person name="Wesolowski-Louvel M."/>
            <person name="Westhof E."/>
            <person name="Wirth B."/>
            <person name="Zeniou-Meyer M."/>
            <person name="Zivanovic Y."/>
            <person name="Bolotin-Fukuhara M."/>
            <person name="Thierry A."/>
            <person name="Bouchier C."/>
            <person name="Caudron B."/>
            <person name="Scarpelli C."/>
            <person name="Gaillardin C."/>
            <person name="Weissenbach J."/>
            <person name="Wincker P."/>
            <person name="Souciet J.-L."/>
        </authorList>
    </citation>
    <scope>NUCLEOTIDE SEQUENCE [LARGE SCALE GENOMIC DNA]</scope>
    <source>
        <strain>CLIB 122 / E 150</strain>
    </source>
</reference>